<protein>
    <recommendedName>
        <fullName>Carnitine O-palmitoyltransferase 2, mitochondrial</fullName>
        <ecNumber>2.3.1.21</ecNumber>
    </recommendedName>
    <alternativeName>
        <fullName>Carnitine palmitoyltransferase II</fullName>
        <shortName>CPT II</shortName>
    </alternativeName>
</protein>
<proteinExistence type="evidence at transcript level"/>
<reference key="1">
    <citation type="submission" date="2003-10" db="EMBL/GenBank/DDBJ databases">
        <title>Isolation and characterization of cDNA for macaque neurological disease genes.</title>
        <authorList>
            <person name="Kusuda J."/>
            <person name="Osada N."/>
            <person name="Tanuma R."/>
            <person name="Hirata M."/>
            <person name="Sugano S."/>
            <person name="Hashimoto K."/>
        </authorList>
    </citation>
    <scope>NUCLEOTIDE SEQUENCE [LARGE SCALE MRNA]</scope>
    <source>
        <tissue>Occipital cortex</tissue>
    </source>
</reference>
<accession>Q60HG9</accession>
<feature type="transit peptide" description="Mitochondrion" evidence="1">
    <location>
        <begin position="1"/>
        <end position="25"/>
    </location>
</feature>
<feature type="chain" id="PRO_0000004425" description="Carnitine O-palmitoyltransferase 2, mitochondrial">
    <location>
        <begin position="26"/>
        <end position="658"/>
    </location>
</feature>
<feature type="topological domain" description="Mitochondrial matrix" evidence="1">
    <location>
        <begin position="26"/>
        <end position="178"/>
    </location>
</feature>
<feature type="intramembrane region" description="Note=Mitochondrial inner membrane" evidence="1">
    <location>
        <begin position="179"/>
        <end position="208"/>
    </location>
</feature>
<feature type="topological domain" description="Mitochondrial matrix" evidence="1">
    <location>
        <begin position="209"/>
        <end position="658"/>
    </location>
</feature>
<feature type="active site" description="Proton acceptor" evidence="1">
    <location>
        <position position="372"/>
    </location>
</feature>
<feature type="binding site" evidence="1">
    <location>
        <begin position="452"/>
        <end position="464"/>
    </location>
    <ligand>
        <name>CoA</name>
        <dbReference type="ChEBI" id="CHEBI:57287"/>
    </ligand>
</feature>
<feature type="binding site" evidence="1">
    <location>
        <position position="486"/>
    </location>
    <ligand>
        <name>(R)-carnitine</name>
        <dbReference type="ChEBI" id="CHEBI:16347"/>
    </ligand>
</feature>
<feature type="binding site" evidence="1">
    <location>
        <position position="488"/>
    </location>
    <ligand>
        <name>(R)-carnitine</name>
        <dbReference type="ChEBI" id="CHEBI:16347"/>
    </ligand>
</feature>
<feature type="binding site" evidence="1">
    <location>
        <position position="499"/>
    </location>
    <ligand>
        <name>(R)-carnitine</name>
        <dbReference type="ChEBI" id="CHEBI:16347"/>
    </ligand>
</feature>
<feature type="modified residue" description="N6-succinyllysine" evidence="3">
    <location>
        <position position="69"/>
    </location>
</feature>
<feature type="modified residue" description="N6-acetyllysine" evidence="3">
    <location>
        <position position="79"/>
    </location>
</feature>
<feature type="modified residue" description="N6-succinyllysine" evidence="3">
    <location>
        <position position="85"/>
    </location>
</feature>
<feature type="modified residue" description="N6-acetyllysine; alternate" evidence="3">
    <location>
        <position position="239"/>
    </location>
</feature>
<feature type="modified residue" description="N6-succinyllysine; alternate" evidence="3">
    <location>
        <position position="239"/>
    </location>
</feature>
<feature type="modified residue" description="N6-acetyllysine" evidence="3">
    <location>
        <position position="305"/>
    </location>
</feature>
<feature type="modified residue" description="N6-acetyllysine; alternate" evidence="3">
    <location>
        <position position="418"/>
    </location>
</feature>
<feature type="modified residue" description="N6-succinyllysine; alternate" evidence="3">
    <location>
        <position position="418"/>
    </location>
</feature>
<feature type="modified residue" description="N6-succinyllysine" evidence="3">
    <location>
        <position position="424"/>
    </location>
</feature>
<feature type="modified residue" description="N6-succinyllysine" evidence="3">
    <location>
        <position position="439"/>
    </location>
</feature>
<feature type="modified residue" description="N6-acetyllysine; alternate" evidence="3">
    <location>
        <position position="510"/>
    </location>
</feature>
<feature type="modified residue" description="N6-succinyllysine; alternate" evidence="3">
    <location>
        <position position="510"/>
    </location>
</feature>
<feature type="modified residue" description="N6-acetyllysine; alternate" evidence="3">
    <location>
        <position position="544"/>
    </location>
</feature>
<feature type="modified residue" description="N6-succinyllysine; alternate" evidence="3">
    <location>
        <position position="544"/>
    </location>
</feature>
<organism>
    <name type="scientific">Macaca fascicularis</name>
    <name type="common">Crab-eating macaque</name>
    <name type="synonym">Cynomolgus monkey</name>
    <dbReference type="NCBI Taxonomy" id="9541"/>
    <lineage>
        <taxon>Eukaryota</taxon>
        <taxon>Metazoa</taxon>
        <taxon>Chordata</taxon>
        <taxon>Craniata</taxon>
        <taxon>Vertebrata</taxon>
        <taxon>Euteleostomi</taxon>
        <taxon>Mammalia</taxon>
        <taxon>Eutheria</taxon>
        <taxon>Euarchontoglires</taxon>
        <taxon>Primates</taxon>
        <taxon>Haplorrhini</taxon>
        <taxon>Catarrhini</taxon>
        <taxon>Cercopithecidae</taxon>
        <taxon>Cercopithecinae</taxon>
        <taxon>Macaca</taxon>
    </lineage>
</organism>
<sequence>MVPRLLLRAWPRGPAVGPGAPSRPLSAGSGPGQYLQRSIVPTMHYQDSLPRLPIPKLEDTIRRYLSAQKPLLDDGQFRKTEQFCKNFENGIGKELHEQLVAQDKQNKHTSYISGPWFDMYLSARDSVVLNFNPFMAFNPDPKSEYNDQLTRATNMTVSAIRFLKTLRDGLLEPEVFHLNPAKSDTDTFKRLIRFVPSSLSWYGAYLVNAYPLDMSQYFRLFNSTRLPKPSRDELFTDDKARHLLVLRKGNFYIFDVLDQDGNIVSPSEIQAHLKYILSDSSPAPEFPLAYLTSENRDIWAELRQKLMSSGNEESLRKVDSAVFCLCLDDFPIKDLVHLSHNMLHGDGTNRWFDKSFNLIIAKDGSAAVHFEHSWGDGVAVLRFFNEVFKDSTQIPAITPQSQPATADSTVTVQKLNFKLTDALKTGITAAKEKFDATMKTLTIDCLQFQRGGKEFLKKQKLSPDAVAQLAFQMAFLRQYGQTVATYESCSTAAFKHGRTETIRPASIYTKRCSEAFVREPSRHSAGELQQMMAECSKYHGQLTKEAAMGQGFDRHLFALRHLAAAKGIILPELYLDPAYGQINHNVLSTSTLSSPAVNLGGFAPVVSDGFGVGYAVHGNWIGCNVSSYPGRNAREFLQCVEKALEDMFDALEGKSIKS</sequence>
<dbReference type="EC" id="2.3.1.21"/>
<dbReference type="EMBL" id="AB125158">
    <property type="protein sequence ID" value="BAD51946.1"/>
    <property type="molecule type" value="mRNA"/>
</dbReference>
<dbReference type="RefSeq" id="XP_005543388.1">
    <property type="nucleotide sequence ID" value="XM_005543331.2"/>
</dbReference>
<dbReference type="SMR" id="Q60HG9"/>
<dbReference type="STRING" id="9541.ENSMFAP00000022352"/>
<dbReference type="GeneID" id="102137160"/>
<dbReference type="KEGG" id="mcf:102137160"/>
<dbReference type="CTD" id="1376"/>
<dbReference type="VEuPathDB" id="HostDB:ENSMFAG00000040882"/>
<dbReference type="eggNOG" id="KOG3719">
    <property type="taxonomic scope" value="Eukaryota"/>
</dbReference>
<dbReference type="OMA" id="HILVMRR"/>
<dbReference type="UniPathway" id="UPA00659"/>
<dbReference type="Proteomes" id="UP000233100">
    <property type="component" value="Chromosome 1"/>
</dbReference>
<dbReference type="GO" id="GO:0005743">
    <property type="term" value="C:mitochondrial inner membrane"/>
    <property type="evidence" value="ECO:0007669"/>
    <property type="project" value="UniProtKB-SubCell"/>
</dbReference>
<dbReference type="GO" id="GO:0016746">
    <property type="term" value="F:acyltransferase activity"/>
    <property type="evidence" value="ECO:0000250"/>
    <property type="project" value="UniProtKB"/>
</dbReference>
<dbReference type="GO" id="GO:0008458">
    <property type="term" value="F:carnitine O-octanoyltransferase activity"/>
    <property type="evidence" value="ECO:0007669"/>
    <property type="project" value="RHEA"/>
</dbReference>
<dbReference type="GO" id="GO:0004095">
    <property type="term" value="F:carnitine O-palmitoyltransferase activity"/>
    <property type="evidence" value="ECO:0000250"/>
    <property type="project" value="UniProtKB"/>
</dbReference>
<dbReference type="GO" id="GO:0009437">
    <property type="term" value="P:carnitine metabolic process"/>
    <property type="evidence" value="ECO:0000250"/>
    <property type="project" value="UniProtKB"/>
</dbReference>
<dbReference type="GO" id="GO:0006635">
    <property type="term" value="P:fatty acid beta-oxidation"/>
    <property type="evidence" value="ECO:0000250"/>
    <property type="project" value="UniProtKB"/>
</dbReference>
<dbReference type="GO" id="GO:0001676">
    <property type="term" value="P:long-chain fatty acid metabolic process"/>
    <property type="evidence" value="ECO:0000250"/>
    <property type="project" value="UniProtKB"/>
</dbReference>
<dbReference type="FunFam" id="3.30.559.10:FF:000010">
    <property type="entry name" value="carnitine O-palmitoyltransferase 2, mitochondrial"/>
    <property type="match status" value="1"/>
</dbReference>
<dbReference type="Gene3D" id="1.20.1280.180">
    <property type="match status" value="1"/>
</dbReference>
<dbReference type="Gene3D" id="3.30.559.10">
    <property type="entry name" value="Chloramphenicol acetyltransferase-like domain"/>
    <property type="match status" value="1"/>
</dbReference>
<dbReference type="Gene3D" id="1.10.275.20">
    <property type="entry name" value="Choline/Carnitine o-acyltransferase"/>
    <property type="match status" value="1"/>
</dbReference>
<dbReference type="Gene3D" id="3.30.559.70">
    <property type="entry name" value="Choline/Carnitine o-acyltransferase, domain 2"/>
    <property type="match status" value="1"/>
</dbReference>
<dbReference type="InterPro" id="IPR000542">
    <property type="entry name" value="Carn_acyl_trans"/>
</dbReference>
<dbReference type="InterPro" id="IPR042572">
    <property type="entry name" value="Carn_acyl_trans_N"/>
</dbReference>
<dbReference type="InterPro" id="IPR023213">
    <property type="entry name" value="CAT-like_dom_sf"/>
</dbReference>
<dbReference type="InterPro" id="IPR039551">
    <property type="entry name" value="Cho/carn_acyl_trans"/>
</dbReference>
<dbReference type="InterPro" id="IPR042231">
    <property type="entry name" value="Cho/carn_acyl_trans_2"/>
</dbReference>
<dbReference type="PANTHER" id="PTHR22589">
    <property type="entry name" value="CARNITINE O-ACYLTRANSFERASE"/>
    <property type="match status" value="1"/>
</dbReference>
<dbReference type="PANTHER" id="PTHR22589:SF51">
    <property type="entry name" value="CARNITINE O-PALMITOYLTRANSFERASE 2, MITOCHONDRIAL"/>
    <property type="match status" value="1"/>
</dbReference>
<dbReference type="Pfam" id="PF00755">
    <property type="entry name" value="Carn_acyltransf"/>
    <property type="match status" value="1"/>
</dbReference>
<dbReference type="SUPFAM" id="SSF52777">
    <property type="entry name" value="CoA-dependent acyltransferases"/>
    <property type="match status" value="2"/>
</dbReference>
<dbReference type="PROSITE" id="PS00439">
    <property type="entry name" value="ACYLTRANSF_C_1"/>
    <property type="match status" value="1"/>
</dbReference>
<dbReference type="PROSITE" id="PS00440">
    <property type="entry name" value="ACYLTRANSF_C_2"/>
    <property type="match status" value="1"/>
</dbReference>
<evidence type="ECO:0000250" key="1"/>
<evidence type="ECO:0000250" key="2">
    <source>
        <dbReference type="UniProtKB" id="P23786"/>
    </source>
</evidence>
<evidence type="ECO:0000250" key="3">
    <source>
        <dbReference type="UniProtKB" id="P52825"/>
    </source>
</evidence>
<evidence type="ECO:0000305" key="4"/>
<comment type="function">
    <text evidence="2">Involved in the intramitochondrial synthesis of acylcarnitines from accumulated acyl-CoA metabolites. Reconverts acylcarnitines back into the respective acyl-CoA esters that can then undergo beta-oxidation, an essential step for the mitochondrial uptake of long-chain fatty acids and their subsequent beta-oxidation in the mitochondrion. Active with medium (C8-C12) and long-chain (C14-C18) acyl-CoA esters.</text>
</comment>
<comment type="catalytic activity">
    <reaction evidence="2">
        <text>(R)-carnitine + hexadecanoyl-CoA = O-hexadecanoyl-(R)-carnitine + CoA</text>
        <dbReference type="Rhea" id="RHEA:12661"/>
        <dbReference type="ChEBI" id="CHEBI:16347"/>
        <dbReference type="ChEBI" id="CHEBI:17490"/>
        <dbReference type="ChEBI" id="CHEBI:57287"/>
        <dbReference type="ChEBI" id="CHEBI:57379"/>
        <dbReference type="EC" id="2.3.1.21"/>
    </reaction>
    <physiologicalReaction direction="right-to-left" evidence="2">
        <dbReference type="Rhea" id="RHEA:12663"/>
    </physiologicalReaction>
</comment>
<comment type="catalytic activity">
    <reaction evidence="2">
        <text>octanoyl-CoA + (R)-carnitine = O-octanoyl-(R)-carnitine + CoA</text>
        <dbReference type="Rhea" id="RHEA:17177"/>
        <dbReference type="ChEBI" id="CHEBI:16347"/>
        <dbReference type="ChEBI" id="CHEBI:18102"/>
        <dbReference type="ChEBI" id="CHEBI:57287"/>
        <dbReference type="ChEBI" id="CHEBI:57386"/>
    </reaction>
</comment>
<comment type="catalytic activity">
    <reaction evidence="2">
        <text>decanoyl-CoA + (R)-carnitine = O-decanoyl-(R)-carnitine + CoA</text>
        <dbReference type="Rhea" id="RHEA:44828"/>
        <dbReference type="ChEBI" id="CHEBI:16347"/>
        <dbReference type="ChEBI" id="CHEBI:28717"/>
        <dbReference type="ChEBI" id="CHEBI:57287"/>
        <dbReference type="ChEBI" id="CHEBI:61430"/>
    </reaction>
</comment>
<comment type="catalytic activity">
    <reaction evidence="2">
        <text>dodecanoyl-CoA + (R)-carnitine = O-dodecanoyl-R-carnitine + CoA</text>
        <dbReference type="Rhea" id="RHEA:40279"/>
        <dbReference type="ChEBI" id="CHEBI:16347"/>
        <dbReference type="ChEBI" id="CHEBI:57287"/>
        <dbReference type="ChEBI" id="CHEBI:57375"/>
        <dbReference type="ChEBI" id="CHEBI:77086"/>
    </reaction>
</comment>
<comment type="catalytic activity">
    <reaction evidence="2">
        <text>tetradecanoyl-CoA + (R)-carnitine = O-tetradecanoyl-(R)-carnitine + CoA</text>
        <dbReference type="Rhea" id="RHEA:44832"/>
        <dbReference type="ChEBI" id="CHEBI:16347"/>
        <dbReference type="ChEBI" id="CHEBI:57287"/>
        <dbReference type="ChEBI" id="CHEBI:57385"/>
        <dbReference type="ChEBI" id="CHEBI:84634"/>
    </reaction>
</comment>
<comment type="catalytic activity">
    <reaction evidence="2">
        <text>(R)-carnitine + octadecanoyl-CoA = O-octadecanoyl-(R)-carnitine + CoA</text>
        <dbReference type="Rhea" id="RHEA:44840"/>
        <dbReference type="ChEBI" id="CHEBI:16347"/>
        <dbReference type="ChEBI" id="CHEBI:57287"/>
        <dbReference type="ChEBI" id="CHEBI:57394"/>
        <dbReference type="ChEBI" id="CHEBI:84644"/>
    </reaction>
</comment>
<comment type="catalytic activity">
    <reaction evidence="2">
        <text>eicosanoyl-CoA + (R)-carnitine = O-eicosanoyl-(R)-carnitine + CoA</text>
        <dbReference type="Rhea" id="RHEA:44844"/>
        <dbReference type="ChEBI" id="CHEBI:16347"/>
        <dbReference type="ChEBI" id="CHEBI:57287"/>
        <dbReference type="ChEBI" id="CHEBI:57380"/>
        <dbReference type="ChEBI" id="CHEBI:84645"/>
    </reaction>
</comment>
<comment type="catalytic activity">
    <reaction evidence="2">
        <text>(9Z)-tetradecenoyl-CoA + (R)-carnitine = O-(9Z)-tetradecenoyl-(R)-carnitine + CoA</text>
        <dbReference type="Rhea" id="RHEA:44848"/>
        <dbReference type="ChEBI" id="CHEBI:16347"/>
        <dbReference type="ChEBI" id="CHEBI:57287"/>
        <dbReference type="ChEBI" id="CHEBI:65060"/>
        <dbReference type="ChEBI" id="CHEBI:84647"/>
    </reaction>
</comment>
<comment type="catalytic activity">
    <reaction evidence="2">
        <text>(5Z)-tetradecenoyl-CoA + (R)-carnitine = O-(5Z)-tetradecenoyl-(R)-carnitine + CoA</text>
        <dbReference type="Rhea" id="RHEA:44852"/>
        <dbReference type="ChEBI" id="CHEBI:16347"/>
        <dbReference type="ChEBI" id="CHEBI:57287"/>
        <dbReference type="ChEBI" id="CHEBI:84649"/>
        <dbReference type="ChEBI" id="CHEBI:84650"/>
    </reaction>
</comment>
<comment type="catalytic activity">
    <reaction evidence="2">
        <text>(R)-carnitine + (9Z)-octadecenoyl-CoA = O-(9Z)-octadecenoyl-(R)-carnitine + CoA</text>
        <dbReference type="Rhea" id="RHEA:44856"/>
        <dbReference type="ChEBI" id="CHEBI:16347"/>
        <dbReference type="ChEBI" id="CHEBI:57287"/>
        <dbReference type="ChEBI" id="CHEBI:57387"/>
        <dbReference type="ChEBI" id="CHEBI:84651"/>
    </reaction>
</comment>
<comment type="catalytic activity">
    <reaction evidence="2">
        <text>4,8-dimethylnonanoyl-CoA + (R)-carnitine = O-4,8-dimethylnonanoyl-(R)-carnitine + CoA</text>
        <dbReference type="Rhea" id="RHEA:44860"/>
        <dbReference type="ChEBI" id="CHEBI:16347"/>
        <dbReference type="ChEBI" id="CHEBI:57287"/>
        <dbReference type="ChEBI" id="CHEBI:77061"/>
        <dbReference type="ChEBI" id="CHEBI:84654"/>
    </reaction>
</comment>
<comment type="pathway">
    <text evidence="2">Lipid metabolism; fatty acid beta-oxidation.</text>
</comment>
<comment type="subcellular location">
    <subcellularLocation>
        <location evidence="1">Mitochondrion inner membrane</location>
        <topology evidence="1">Peripheral membrane protein</topology>
        <orientation evidence="1">Matrix side</orientation>
    </subcellularLocation>
</comment>
<comment type="similarity">
    <text evidence="4">Belongs to the carnitine/choline acetyltransferase family.</text>
</comment>
<keyword id="KW-0007">Acetylation</keyword>
<keyword id="KW-0012">Acyltransferase</keyword>
<keyword id="KW-0276">Fatty acid metabolism</keyword>
<keyword id="KW-0443">Lipid metabolism</keyword>
<keyword id="KW-0472">Membrane</keyword>
<keyword id="KW-0496">Mitochondrion</keyword>
<keyword id="KW-0999">Mitochondrion inner membrane</keyword>
<keyword id="KW-1185">Reference proteome</keyword>
<keyword id="KW-0808">Transferase</keyword>
<keyword id="KW-0809">Transit peptide</keyword>
<keyword id="KW-0813">Transport</keyword>
<name>CPT2_MACFA</name>
<gene>
    <name type="primary">CPT2</name>
    <name type="ORF">QorA-10180</name>
</gene>